<reference key="1">
    <citation type="journal article" date="2005" name="Science">
        <title>Life at depth: Photobacterium profundum genome sequence and expression analysis.</title>
        <authorList>
            <person name="Vezzi A."/>
            <person name="Campanaro S."/>
            <person name="D'Angelo M."/>
            <person name="Simonato F."/>
            <person name="Vitulo N."/>
            <person name="Lauro F.M."/>
            <person name="Cestaro A."/>
            <person name="Malacrida G."/>
            <person name="Simionati B."/>
            <person name="Cannata N."/>
            <person name="Romualdi C."/>
            <person name="Bartlett D.H."/>
            <person name="Valle G."/>
        </authorList>
    </citation>
    <scope>NUCLEOTIDE SEQUENCE [LARGE SCALE GENOMIC DNA]</scope>
    <source>
        <strain>ATCC BAA-1253 / SS9</strain>
    </source>
</reference>
<proteinExistence type="inferred from homology"/>
<protein>
    <recommendedName>
        <fullName evidence="1">Large ribosomal subunit protein uL23</fullName>
    </recommendedName>
    <alternativeName>
        <fullName evidence="2">50S ribosomal protein L23</fullName>
    </alternativeName>
</protein>
<organism>
    <name type="scientific">Photobacterium profundum (strain SS9)</name>
    <dbReference type="NCBI Taxonomy" id="298386"/>
    <lineage>
        <taxon>Bacteria</taxon>
        <taxon>Pseudomonadati</taxon>
        <taxon>Pseudomonadota</taxon>
        <taxon>Gammaproteobacteria</taxon>
        <taxon>Vibrionales</taxon>
        <taxon>Vibrionaceae</taxon>
        <taxon>Photobacterium</taxon>
    </lineage>
</organism>
<comment type="function">
    <text evidence="1">One of the early assembly proteins it binds 23S rRNA. One of the proteins that surrounds the polypeptide exit tunnel on the outside of the ribosome. Forms the main docking site for trigger factor binding to the ribosome.</text>
</comment>
<comment type="subunit">
    <text evidence="1">Part of the 50S ribosomal subunit. Contacts protein L29, and trigger factor when it is bound to the ribosome.</text>
</comment>
<comment type="similarity">
    <text evidence="1">Belongs to the universal ribosomal protein uL23 family.</text>
</comment>
<keyword id="KW-1185">Reference proteome</keyword>
<keyword id="KW-0687">Ribonucleoprotein</keyword>
<keyword id="KW-0689">Ribosomal protein</keyword>
<keyword id="KW-0694">RNA-binding</keyword>
<keyword id="KW-0699">rRNA-binding</keyword>
<evidence type="ECO:0000255" key="1">
    <source>
        <dbReference type="HAMAP-Rule" id="MF_01369"/>
    </source>
</evidence>
<evidence type="ECO:0000305" key="2"/>
<dbReference type="EMBL" id="CR378663">
    <property type="protein sequence ID" value="CAG18761.1"/>
    <property type="molecule type" value="Genomic_DNA"/>
</dbReference>
<dbReference type="RefSeq" id="WP_006232341.1">
    <property type="nucleotide sequence ID" value="NC_006370.1"/>
</dbReference>
<dbReference type="SMR" id="Q6LVB4"/>
<dbReference type="STRING" id="298386.PBPRA0322"/>
<dbReference type="KEGG" id="ppr:PBPRA0322"/>
<dbReference type="eggNOG" id="COG0089">
    <property type="taxonomic scope" value="Bacteria"/>
</dbReference>
<dbReference type="HOGENOM" id="CLU_037562_3_1_6"/>
<dbReference type="Proteomes" id="UP000000593">
    <property type="component" value="Chromosome 1"/>
</dbReference>
<dbReference type="GO" id="GO:1990904">
    <property type="term" value="C:ribonucleoprotein complex"/>
    <property type="evidence" value="ECO:0007669"/>
    <property type="project" value="UniProtKB-KW"/>
</dbReference>
<dbReference type="GO" id="GO:0005840">
    <property type="term" value="C:ribosome"/>
    <property type="evidence" value="ECO:0007669"/>
    <property type="project" value="UniProtKB-KW"/>
</dbReference>
<dbReference type="GO" id="GO:0019843">
    <property type="term" value="F:rRNA binding"/>
    <property type="evidence" value="ECO:0007669"/>
    <property type="project" value="UniProtKB-UniRule"/>
</dbReference>
<dbReference type="GO" id="GO:0003735">
    <property type="term" value="F:structural constituent of ribosome"/>
    <property type="evidence" value="ECO:0007669"/>
    <property type="project" value="InterPro"/>
</dbReference>
<dbReference type="GO" id="GO:0006412">
    <property type="term" value="P:translation"/>
    <property type="evidence" value="ECO:0007669"/>
    <property type="project" value="UniProtKB-UniRule"/>
</dbReference>
<dbReference type="FunFam" id="3.30.70.330:FF:000001">
    <property type="entry name" value="50S ribosomal protein L23"/>
    <property type="match status" value="1"/>
</dbReference>
<dbReference type="Gene3D" id="3.30.70.330">
    <property type="match status" value="1"/>
</dbReference>
<dbReference type="HAMAP" id="MF_01369_B">
    <property type="entry name" value="Ribosomal_uL23_B"/>
    <property type="match status" value="1"/>
</dbReference>
<dbReference type="InterPro" id="IPR012677">
    <property type="entry name" value="Nucleotide-bd_a/b_plait_sf"/>
</dbReference>
<dbReference type="InterPro" id="IPR013025">
    <property type="entry name" value="Ribosomal_uL23-like"/>
</dbReference>
<dbReference type="InterPro" id="IPR012678">
    <property type="entry name" value="Ribosomal_uL23/eL15/eS24_sf"/>
</dbReference>
<dbReference type="NCBIfam" id="NF004358">
    <property type="entry name" value="PRK05738.1-1"/>
    <property type="match status" value="1"/>
</dbReference>
<dbReference type="NCBIfam" id="NF004359">
    <property type="entry name" value="PRK05738.1-3"/>
    <property type="match status" value="1"/>
</dbReference>
<dbReference type="NCBIfam" id="NF004363">
    <property type="entry name" value="PRK05738.2-4"/>
    <property type="match status" value="1"/>
</dbReference>
<dbReference type="PANTHER" id="PTHR11620">
    <property type="entry name" value="60S RIBOSOMAL PROTEIN L23A"/>
    <property type="match status" value="1"/>
</dbReference>
<dbReference type="Pfam" id="PF00276">
    <property type="entry name" value="Ribosomal_L23"/>
    <property type="match status" value="1"/>
</dbReference>
<dbReference type="SUPFAM" id="SSF54189">
    <property type="entry name" value="Ribosomal proteins S24e, L23 and L15e"/>
    <property type="match status" value="1"/>
</dbReference>
<feature type="chain" id="PRO_0000272793" description="Large ribosomal subunit protein uL23">
    <location>
        <begin position="1"/>
        <end position="100"/>
    </location>
</feature>
<gene>
    <name evidence="1" type="primary">rplW</name>
    <name type="ordered locus">PBPRA0322</name>
</gene>
<sequence>MITEERILTVLRAPHISEKATMAAESANTIVFKVAITATKREIKAAVEKLFEVEVKSVNTLVAKGKTKSQGARQGRRSDWKKAYVILKEGQDIDFAGSAE</sequence>
<accession>Q6LVB4</accession>
<name>RL23_PHOPR</name>